<reference key="1">
    <citation type="journal article" date="2007" name="PLoS ONE">
        <title>Analysis of the neurotoxin complex genes in Clostridium botulinum A1-A4 and B1 strains: BoNT/A3, /Ba4 and /B1 clusters are located within plasmids.</title>
        <authorList>
            <person name="Smith T.J."/>
            <person name="Hill K.K."/>
            <person name="Foley B.T."/>
            <person name="Detter J.C."/>
            <person name="Munk A.C."/>
            <person name="Bruce D.C."/>
            <person name="Doggett N.A."/>
            <person name="Smith L.A."/>
            <person name="Marks J.D."/>
            <person name="Xie G."/>
            <person name="Brettin T.S."/>
        </authorList>
    </citation>
    <scope>NUCLEOTIDE SEQUENCE [LARGE SCALE GENOMIC DNA]</scope>
    <source>
        <strain>Okra / Type B1</strain>
    </source>
</reference>
<protein>
    <recommendedName>
        <fullName evidence="1">Glycine cleavage system H protein</fullName>
    </recommendedName>
</protein>
<name>GCSH_CLOBK</name>
<gene>
    <name evidence="1" type="primary">gcvH</name>
    <name type="ordered locus">CLD_0069</name>
</gene>
<sequence length="130" mass="14632">MKVLNNLLYTGDHEWVRVEDNKAYIGISDCAQRMLSDIVFVELPEVDDEIAKGETFATIESVKAASDSYMPVSGTIVEINEELEDNPAALNEDPYGSWIAAIEMSDKNELEELIKPEVYEKICEELDKEA</sequence>
<dbReference type="EMBL" id="CP000939">
    <property type="protein sequence ID" value="ACA43748.1"/>
    <property type="molecule type" value="Genomic_DNA"/>
</dbReference>
<dbReference type="RefSeq" id="WP_003399547.1">
    <property type="nucleotide sequence ID" value="NC_010516.1"/>
</dbReference>
<dbReference type="SMR" id="B1IEV4"/>
<dbReference type="KEGG" id="cbb:CLD_0069"/>
<dbReference type="HOGENOM" id="CLU_097408_2_2_9"/>
<dbReference type="Proteomes" id="UP000008541">
    <property type="component" value="Chromosome"/>
</dbReference>
<dbReference type="GO" id="GO:0005737">
    <property type="term" value="C:cytoplasm"/>
    <property type="evidence" value="ECO:0007669"/>
    <property type="project" value="TreeGrafter"/>
</dbReference>
<dbReference type="GO" id="GO:0005960">
    <property type="term" value="C:glycine cleavage complex"/>
    <property type="evidence" value="ECO:0007669"/>
    <property type="project" value="InterPro"/>
</dbReference>
<dbReference type="GO" id="GO:0019464">
    <property type="term" value="P:glycine decarboxylation via glycine cleavage system"/>
    <property type="evidence" value="ECO:0007669"/>
    <property type="project" value="UniProtKB-UniRule"/>
</dbReference>
<dbReference type="CDD" id="cd06848">
    <property type="entry name" value="GCS_H"/>
    <property type="match status" value="1"/>
</dbReference>
<dbReference type="Gene3D" id="2.40.50.100">
    <property type="match status" value="1"/>
</dbReference>
<dbReference type="HAMAP" id="MF_00272">
    <property type="entry name" value="GcvH"/>
    <property type="match status" value="1"/>
</dbReference>
<dbReference type="InterPro" id="IPR003016">
    <property type="entry name" value="2-oxoA_DH_lipoyl-BS"/>
</dbReference>
<dbReference type="InterPro" id="IPR000089">
    <property type="entry name" value="Biotin_lipoyl"/>
</dbReference>
<dbReference type="InterPro" id="IPR002930">
    <property type="entry name" value="GCV_H"/>
</dbReference>
<dbReference type="InterPro" id="IPR033753">
    <property type="entry name" value="GCV_H/Fam206"/>
</dbReference>
<dbReference type="InterPro" id="IPR017453">
    <property type="entry name" value="GCV_H_sub"/>
</dbReference>
<dbReference type="InterPro" id="IPR011053">
    <property type="entry name" value="Single_hybrid_motif"/>
</dbReference>
<dbReference type="NCBIfam" id="TIGR00527">
    <property type="entry name" value="gcvH"/>
    <property type="match status" value="1"/>
</dbReference>
<dbReference type="NCBIfam" id="NF002270">
    <property type="entry name" value="PRK01202.1"/>
    <property type="match status" value="1"/>
</dbReference>
<dbReference type="PANTHER" id="PTHR11715">
    <property type="entry name" value="GLYCINE CLEAVAGE SYSTEM H PROTEIN"/>
    <property type="match status" value="1"/>
</dbReference>
<dbReference type="PANTHER" id="PTHR11715:SF3">
    <property type="entry name" value="GLYCINE CLEAVAGE SYSTEM H PROTEIN-RELATED"/>
    <property type="match status" value="1"/>
</dbReference>
<dbReference type="Pfam" id="PF01597">
    <property type="entry name" value="GCV_H"/>
    <property type="match status" value="1"/>
</dbReference>
<dbReference type="SUPFAM" id="SSF51230">
    <property type="entry name" value="Single hybrid motif"/>
    <property type="match status" value="1"/>
</dbReference>
<dbReference type="PROSITE" id="PS50968">
    <property type="entry name" value="BIOTINYL_LIPOYL"/>
    <property type="match status" value="1"/>
</dbReference>
<dbReference type="PROSITE" id="PS00189">
    <property type="entry name" value="LIPOYL"/>
    <property type="match status" value="1"/>
</dbReference>
<accession>B1IEV4</accession>
<proteinExistence type="inferred from homology"/>
<evidence type="ECO:0000255" key="1">
    <source>
        <dbReference type="HAMAP-Rule" id="MF_00272"/>
    </source>
</evidence>
<evidence type="ECO:0000255" key="2">
    <source>
        <dbReference type="PROSITE-ProRule" id="PRU01066"/>
    </source>
</evidence>
<keyword id="KW-0450">Lipoyl</keyword>
<comment type="function">
    <text evidence="1">The glycine cleavage system catalyzes the degradation of glycine. The H protein shuttles the methylamine group of glycine from the P protein to the T protein.</text>
</comment>
<comment type="cofactor">
    <cofactor evidence="1">
        <name>(R)-lipoate</name>
        <dbReference type="ChEBI" id="CHEBI:83088"/>
    </cofactor>
    <text evidence="1">Binds 1 lipoyl cofactor covalently.</text>
</comment>
<comment type="subunit">
    <text evidence="1">The glycine cleavage system is composed of four proteins: P, T, L and H.</text>
</comment>
<comment type="similarity">
    <text evidence="1">Belongs to the GcvH family.</text>
</comment>
<feature type="chain" id="PRO_1000114511" description="Glycine cleavage system H protein">
    <location>
        <begin position="1"/>
        <end position="130"/>
    </location>
</feature>
<feature type="domain" description="Lipoyl-binding" evidence="2">
    <location>
        <begin position="22"/>
        <end position="103"/>
    </location>
</feature>
<feature type="modified residue" description="N6-lipoyllysine" evidence="1">
    <location>
        <position position="63"/>
    </location>
</feature>
<organism>
    <name type="scientific">Clostridium botulinum (strain Okra / Type B1)</name>
    <dbReference type="NCBI Taxonomy" id="498213"/>
    <lineage>
        <taxon>Bacteria</taxon>
        <taxon>Bacillati</taxon>
        <taxon>Bacillota</taxon>
        <taxon>Clostridia</taxon>
        <taxon>Eubacteriales</taxon>
        <taxon>Clostridiaceae</taxon>
        <taxon>Clostridium</taxon>
    </lineage>
</organism>